<reference key="1">
    <citation type="journal article" date="2015" name="Genome Announc.">
        <title>Genome sequence of Aspergillus flavus NRRL 3357, a strain that causes aflatoxin contamination of food and feed.</title>
        <authorList>
            <person name="Nierman W.C."/>
            <person name="Yu J."/>
            <person name="Fedorova-Abrams N.D."/>
            <person name="Losada L."/>
            <person name="Cleveland T.E."/>
            <person name="Bhatnagar D."/>
            <person name="Bennett J.W."/>
            <person name="Dean R."/>
            <person name="Payne G.A."/>
        </authorList>
    </citation>
    <scope>NUCLEOTIDE SEQUENCE [LARGE SCALE GENOMIC DNA]</scope>
    <source>
        <strain>ATCC 200026 / FGSC A1120 / IAM 13836 / NRRL 3357 / JCM 12722 / SRRC 167</strain>
    </source>
</reference>
<gene>
    <name type="primary">aglD</name>
    <name type="ORF">AFLA_105840</name>
</gene>
<name>AGALD_ASPFN</name>
<accession>B8N7Z0</accession>
<comment type="function">
    <text evidence="1">Hydrolyzes a variety of simple alpha-D-galactoside as well as more complex molecules such as oligosaccharides and polysaccharides.</text>
</comment>
<comment type="catalytic activity">
    <reaction>
        <text>Hydrolysis of terminal, non-reducing alpha-D-galactose residues in alpha-D-galactosides, including galactose oligosaccharides, galactomannans and galactolipids.</text>
        <dbReference type="EC" id="3.2.1.22"/>
    </reaction>
</comment>
<comment type="subcellular location">
    <subcellularLocation>
        <location evidence="1">Secreted</location>
    </subcellularLocation>
</comment>
<comment type="similarity">
    <text evidence="3">Belongs to the glycosyl hydrolase 27 family.</text>
</comment>
<protein>
    <recommendedName>
        <fullName>Probable alpha-galactosidase D</fullName>
        <ecNumber>3.2.1.22</ecNumber>
    </recommendedName>
    <alternativeName>
        <fullName>Melibiase D</fullName>
    </alternativeName>
</protein>
<proteinExistence type="inferred from homology"/>
<evidence type="ECO:0000250" key="1"/>
<evidence type="ECO:0000255" key="2"/>
<evidence type="ECO:0000305" key="3"/>
<organism>
    <name type="scientific">Aspergillus flavus (strain ATCC 200026 / FGSC A1120 / IAM 13836 / NRRL 3357 / JCM 12722 / SRRC 167)</name>
    <dbReference type="NCBI Taxonomy" id="332952"/>
    <lineage>
        <taxon>Eukaryota</taxon>
        <taxon>Fungi</taxon>
        <taxon>Dikarya</taxon>
        <taxon>Ascomycota</taxon>
        <taxon>Pezizomycotina</taxon>
        <taxon>Eurotiomycetes</taxon>
        <taxon>Eurotiomycetidae</taxon>
        <taxon>Eurotiales</taxon>
        <taxon>Aspergillaceae</taxon>
        <taxon>Aspergillus</taxon>
        <taxon>Aspergillus subgen. Circumdati</taxon>
    </lineage>
</organism>
<keyword id="KW-0119">Carbohydrate metabolism</keyword>
<keyword id="KW-1015">Disulfide bond</keyword>
<keyword id="KW-0325">Glycoprotein</keyword>
<keyword id="KW-0326">Glycosidase</keyword>
<keyword id="KW-0378">Hydrolase</keyword>
<keyword id="KW-0624">Polysaccharide degradation</keyword>
<keyword id="KW-0964">Secreted</keyword>
<keyword id="KW-0732">Signal</keyword>
<sequence length="655" mass="70844">MLPKIFYLSLLPAALGHPHLQPRLDNGLARTPQMGWNTYNHYSCSPNETIVRSNAQALVDLGLASLGYRYVTTDCGWTVADRLSDGSLTWNETLFPEGFPALGKYLHDLDLLFGVYQDSGIKLCGSPPDNVGNYEDQDARTFASWEVDSLKYDNCYSDAATGYPNVNYEPSTSPQPRFANMSRALAAQNRSMVFQVCEWGIDFPARWAPALGHSWRIGNDIIPHWRAIYRTLNQAVPQTSFAGPGQWPDLDMLFVGNDILSIPEEQTHFSLWAILKSPLTIGAALKDDETSINDESLQILKQADIIGYNQDSLGVSASLRRRWTEEGYEVWSGPLSGGRTVAALINWRNESRDLTLDLPDIGLQYAGTVKNIWDGTTAQNVKTSYTAKVQGHGTILLELQDTTASGQYPGDTFATSTGSSTTFESIYGVTTSFRYNITVKLSEASSSSDVKIQSTASNKTITAQVSASGTEASAQIPLLAGSSNSITIVSPQSVDAITITPPNGTYFPNTAFTTIGDADTVSCGAGYCQPVGSKIGNISTNGTARAVIPATAGTKYLAIDYINNDVAFDSAWDWGSNSRNLTVSVNGNKPVRIEVPLSGQHSELFGPGKGWWDTATIGVLTEGWKDGDNDVVIGNEGGESGFTSYGPDFVGLRVL</sequence>
<dbReference type="EC" id="3.2.1.22"/>
<dbReference type="EMBL" id="EQ963475">
    <property type="protein sequence ID" value="EED53209.1"/>
    <property type="molecule type" value="Genomic_DNA"/>
</dbReference>
<dbReference type="RefSeq" id="XP_002376455.1">
    <property type="nucleotide sequence ID" value="XM_002376414.1"/>
</dbReference>
<dbReference type="SMR" id="B8N7Z0"/>
<dbReference type="STRING" id="332952.B8N7Z0"/>
<dbReference type="GlyCosmos" id="B8N7Z0">
    <property type="glycosylation" value="11 sites, No reported glycans"/>
</dbReference>
<dbReference type="EnsemblFungi" id="EED53209">
    <property type="protein sequence ID" value="EED53209"/>
    <property type="gene ID" value="AFLA_105840"/>
</dbReference>
<dbReference type="VEuPathDB" id="FungiDB:AFLA_006516"/>
<dbReference type="eggNOG" id="KOG2366">
    <property type="taxonomic scope" value="Eukaryota"/>
</dbReference>
<dbReference type="HOGENOM" id="CLU_013093_3_0_1"/>
<dbReference type="OMA" id="SYNHYSC"/>
<dbReference type="GO" id="GO:0005576">
    <property type="term" value="C:extracellular region"/>
    <property type="evidence" value="ECO:0007669"/>
    <property type="project" value="UniProtKB-SubCell"/>
</dbReference>
<dbReference type="GO" id="GO:0004557">
    <property type="term" value="F:alpha-galactosidase activity"/>
    <property type="evidence" value="ECO:0007669"/>
    <property type="project" value="UniProtKB-EC"/>
</dbReference>
<dbReference type="GO" id="GO:0000272">
    <property type="term" value="P:polysaccharide catabolic process"/>
    <property type="evidence" value="ECO:0007669"/>
    <property type="project" value="UniProtKB-KW"/>
</dbReference>
<dbReference type="CDD" id="cd04081">
    <property type="entry name" value="CBM35_galactosidase-like"/>
    <property type="match status" value="1"/>
</dbReference>
<dbReference type="CDD" id="cd14792">
    <property type="entry name" value="GH27"/>
    <property type="match status" value="1"/>
</dbReference>
<dbReference type="FunFam" id="2.60.40.1180:FF:000008">
    <property type="entry name" value="Alpha-galactosidase"/>
    <property type="match status" value="1"/>
</dbReference>
<dbReference type="FunFam" id="3.20.20.70:FF:000197">
    <property type="entry name" value="Alpha-galactosidase"/>
    <property type="match status" value="1"/>
</dbReference>
<dbReference type="Gene3D" id="3.20.20.70">
    <property type="entry name" value="Aldolase class I"/>
    <property type="match status" value="1"/>
</dbReference>
<dbReference type="Gene3D" id="2.60.120.260">
    <property type="entry name" value="Galactose-binding domain-like"/>
    <property type="match status" value="1"/>
</dbReference>
<dbReference type="Gene3D" id="2.60.40.1180">
    <property type="entry name" value="Golgi alpha-mannosidase II"/>
    <property type="match status" value="1"/>
</dbReference>
<dbReference type="InterPro" id="IPR013785">
    <property type="entry name" value="Aldolase_TIM"/>
</dbReference>
<dbReference type="InterPro" id="IPR002241">
    <property type="entry name" value="Glyco_hydro_27"/>
</dbReference>
<dbReference type="InterPro" id="IPR013780">
    <property type="entry name" value="Glyco_hydro_b"/>
</dbReference>
<dbReference type="InterPro" id="IPR017853">
    <property type="entry name" value="Glycoside_hydrolase_SF"/>
</dbReference>
<dbReference type="InterPro" id="IPR041233">
    <property type="entry name" value="Melibiase_C"/>
</dbReference>
<dbReference type="PANTHER" id="PTHR11452:SF75">
    <property type="entry name" value="ALPHA-GALACTOSIDASE MEL1"/>
    <property type="match status" value="1"/>
</dbReference>
<dbReference type="PANTHER" id="PTHR11452">
    <property type="entry name" value="ALPHA-GALACTOSIDASE/ALPHA-N-ACETYLGALACTOSAMINIDASE"/>
    <property type="match status" value="1"/>
</dbReference>
<dbReference type="Pfam" id="PF16499">
    <property type="entry name" value="Melibiase_2"/>
    <property type="match status" value="1"/>
</dbReference>
<dbReference type="Pfam" id="PF17801">
    <property type="entry name" value="Melibiase_C"/>
    <property type="match status" value="1"/>
</dbReference>
<dbReference type="PRINTS" id="PR00740">
    <property type="entry name" value="GLHYDRLASE27"/>
</dbReference>
<dbReference type="SUPFAM" id="SSF51445">
    <property type="entry name" value="(Trans)glycosidases"/>
    <property type="match status" value="1"/>
</dbReference>
<dbReference type="SUPFAM" id="SSF51011">
    <property type="entry name" value="Glycosyl hydrolase domain"/>
    <property type="match status" value="1"/>
</dbReference>
<feature type="signal peptide" evidence="2">
    <location>
        <begin position="1"/>
        <end position="16"/>
    </location>
</feature>
<feature type="chain" id="PRO_0000395071" description="Probable alpha-galactosidase D">
    <location>
        <begin position="17"/>
        <end position="655"/>
    </location>
</feature>
<feature type="active site" description="Nucleophile" evidence="1">
    <location>
        <position position="153"/>
    </location>
</feature>
<feature type="active site" description="Proton donor" evidence="1">
    <location>
        <position position="220"/>
    </location>
</feature>
<feature type="binding site" evidence="1">
    <location>
        <begin position="198"/>
        <end position="202"/>
    </location>
    <ligand>
        <name>substrate</name>
    </ligand>
</feature>
<feature type="glycosylation site" description="N-linked (GlcNAc...) asparagine" evidence="2">
    <location>
        <position position="47"/>
    </location>
</feature>
<feature type="glycosylation site" description="N-linked (GlcNAc...) asparagine" evidence="2">
    <location>
        <position position="91"/>
    </location>
</feature>
<feature type="glycosylation site" description="N-linked (GlcNAc...) asparagine" evidence="2">
    <location>
        <position position="180"/>
    </location>
</feature>
<feature type="glycosylation site" description="N-linked (GlcNAc...) asparagine" evidence="2">
    <location>
        <position position="189"/>
    </location>
</feature>
<feature type="glycosylation site" description="N-linked (GlcNAc...) asparagine" evidence="2">
    <location>
        <position position="349"/>
    </location>
</feature>
<feature type="glycosylation site" description="N-linked (GlcNAc...) asparagine" evidence="2">
    <location>
        <position position="436"/>
    </location>
</feature>
<feature type="glycosylation site" description="N-linked (GlcNAc...) asparagine" evidence="2">
    <location>
        <position position="458"/>
    </location>
</feature>
<feature type="glycosylation site" description="N-linked (GlcNAc...) asparagine" evidence="2">
    <location>
        <position position="503"/>
    </location>
</feature>
<feature type="glycosylation site" description="N-linked (GlcNAc...) asparagine" evidence="2">
    <location>
        <position position="537"/>
    </location>
</feature>
<feature type="glycosylation site" description="N-linked (GlcNAc...) asparagine" evidence="2">
    <location>
        <position position="541"/>
    </location>
</feature>
<feature type="glycosylation site" description="N-linked (GlcNAc...) asparagine" evidence="2">
    <location>
        <position position="580"/>
    </location>
</feature>
<feature type="disulfide bond" evidence="1">
    <location>
        <begin position="124"/>
        <end position="155"/>
    </location>
</feature>